<protein>
    <recommendedName>
        <fullName evidence="1">Protein RecA</fullName>
    </recommendedName>
    <alternativeName>
        <fullName evidence="1">Recombinase A</fullName>
    </alternativeName>
</protein>
<proteinExistence type="inferred from homology"/>
<name>RECA_RHOBA</name>
<accession>Q7UJJ0</accession>
<comment type="function">
    <text evidence="1">Can catalyze the hydrolysis of ATP in the presence of single-stranded DNA, the ATP-dependent uptake of single-stranded DNA by duplex DNA, and the ATP-dependent hybridization of homologous single-stranded DNAs. It interacts with LexA causing its activation and leading to its autocatalytic cleavage.</text>
</comment>
<comment type="subcellular location">
    <subcellularLocation>
        <location evidence="1">Cytoplasm</location>
    </subcellularLocation>
</comment>
<comment type="similarity">
    <text evidence="1">Belongs to the RecA family.</text>
</comment>
<organism>
    <name type="scientific">Rhodopirellula baltica (strain DSM 10527 / NCIMB 13988 / SH1)</name>
    <dbReference type="NCBI Taxonomy" id="243090"/>
    <lineage>
        <taxon>Bacteria</taxon>
        <taxon>Pseudomonadati</taxon>
        <taxon>Planctomycetota</taxon>
        <taxon>Planctomycetia</taxon>
        <taxon>Pirellulales</taxon>
        <taxon>Pirellulaceae</taxon>
        <taxon>Rhodopirellula</taxon>
    </lineage>
</organism>
<keyword id="KW-0067">ATP-binding</keyword>
<keyword id="KW-0963">Cytoplasm</keyword>
<keyword id="KW-0227">DNA damage</keyword>
<keyword id="KW-0233">DNA recombination</keyword>
<keyword id="KW-0234">DNA repair</keyword>
<keyword id="KW-0238">DNA-binding</keyword>
<keyword id="KW-0547">Nucleotide-binding</keyword>
<keyword id="KW-1185">Reference proteome</keyword>
<keyword id="KW-0742">SOS response</keyword>
<sequence>MVKKPRMATPAASKGVKLDPGMKTILEKEPGLKTTLQQIEKSFGDGAIMPLGASQKLTIDCISTGSLSLDMALGGKGIPRGRIIEVFGPESSGKTTLALHIGAEAQKSGGIAAIIDAEHAFDPSWAKKLGVELDSLLVSQPSSGEEAMQICEMLVKSNAVDVIIIDSVAALVPKAELEGEIGDSHVGLQARLMSQSMRKLTGAIAKSKSAVVFINQIREKVGVMFGSPETTPGGRALKFYCSCRIDVRRIGSLKDGEEQVGQRVKAKIVKNKVAPPFRIAEFDMMHSNGISFEGDLLDLGTENKVVNRSGSWFKYGDTYLGQGKEKARNFLIENPDVSDEIKQKVLAAGGFVAPLEVDADESEEAVEDGEAVANS</sequence>
<gene>
    <name evidence="1" type="primary">recA</name>
    <name type="ordered locus">RB11863</name>
</gene>
<dbReference type="EMBL" id="BX294154">
    <property type="protein sequence ID" value="CAD77268.1"/>
    <property type="molecule type" value="Genomic_DNA"/>
</dbReference>
<dbReference type="RefSeq" id="NP_870193.1">
    <property type="nucleotide sequence ID" value="NC_005027.1"/>
</dbReference>
<dbReference type="RefSeq" id="WP_011123464.1">
    <property type="nucleotide sequence ID" value="NC_005027.1"/>
</dbReference>
<dbReference type="SMR" id="Q7UJJ0"/>
<dbReference type="FunCoup" id="Q7UJJ0">
    <property type="interactions" value="473"/>
</dbReference>
<dbReference type="STRING" id="243090.RB11863"/>
<dbReference type="EnsemblBacteria" id="CAD77268">
    <property type="protein sequence ID" value="CAD77268"/>
    <property type="gene ID" value="RB11863"/>
</dbReference>
<dbReference type="KEGG" id="rba:RB11863"/>
<dbReference type="PATRIC" id="fig|243090.15.peg.5722"/>
<dbReference type="eggNOG" id="COG0468">
    <property type="taxonomic scope" value="Bacteria"/>
</dbReference>
<dbReference type="HOGENOM" id="CLU_040469_3_2_0"/>
<dbReference type="InParanoid" id="Q7UJJ0"/>
<dbReference type="OrthoDB" id="9776733at2"/>
<dbReference type="Proteomes" id="UP000001025">
    <property type="component" value="Chromosome"/>
</dbReference>
<dbReference type="GO" id="GO:0005737">
    <property type="term" value="C:cytoplasm"/>
    <property type="evidence" value="ECO:0007669"/>
    <property type="project" value="UniProtKB-SubCell"/>
</dbReference>
<dbReference type="GO" id="GO:0005524">
    <property type="term" value="F:ATP binding"/>
    <property type="evidence" value="ECO:0007669"/>
    <property type="project" value="UniProtKB-UniRule"/>
</dbReference>
<dbReference type="GO" id="GO:0016887">
    <property type="term" value="F:ATP hydrolysis activity"/>
    <property type="evidence" value="ECO:0007669"/>
    <property type="project" value="InterPro"/>
</dbReference>
<dbReference type="GO" id="GO:0140664">
    <property type="term" value="F:ATP-dependent DNA damage sensor activity"/>
    <property type="evidence" value="ECO:0007669"/>
    <property type="project" value="InterPro"/>
</dbReference>
<dbReference type="GO" id="GO:0003684">
    <property type="term" value="F:damaged DNA binding"/>
    <property type="evidence" value="ECO:0007669"/>
    <property type="project" value="UniProtKB-UniRule"/>
</dbReference>
<dbReference type="GO" id="GO:0003697">
    <property type="term" value="F:single-stranded DNA binding"/>
    <property type="evidence" value="ECO:0007669"/>
    <property type="project" value="UniProtKB-UniRule"/>
</dbReference>
<dbReference type="GO" id="GO:0006310">
    <property type="term" value="P:DNA recombination"/>
    <property type="evidence" value="ECO:0007669"/>
    <property type="project" value="UniProtKB-UniRule"/>
</dbReference>
<dbReference type="GO" id="GO:0006281">
    <property type="term" value="P:DNA repair"/>
    <property type="evidence" value="ECO:0007669"/>
    <property type="project" value="UniProtKB-UniRule"/>
</dbReference>
<dbReference type="GO" id="GO:0009432">
    <property type="term" value="P:SOS response"/>
    <property type="evidence" value="ECO:0007669"/>
    <property type="project" value="UniProtKB-UniRule"/>
</dbReference>
<dbReference type="CDD" id="cd00983">
    <property type="entry name" value="RecA"/>
    <property type="match status" value="1"/>
</dbReference>
<dbReference type="FunFam" id="3.40.50.300:FF:000087">
    <property type="entry name" value="Recombinase RecA"/>
    <property type="match status" value="1"/>
</dbReference>
<dbReference type="Gene3D" id="3.40.50.300">
    <property type="entry name" value="P-loop containing nucleotide triphosphate hydrolases"/>
    <property type="match status" value="1"/>
</dbReference>
<dbReference type="HAMAP" id="MF_00268">
    <property type="entry name" value="RecA"/>
    <property type="match status" value="1"/>
</dbReference>
<dbReference type="InterPro" id="IPR003593">
    <property type="entry name" value="AAA+_ATPase"/>
</dbReference>
<dbReference type="InterPro" id="IPR013765">
    <property type="entry name" value="DNA_recomb/repair_RecA"/>
</dbReference>
<dbReference type="InterPro" id="IPR027417">
    <property type="entry name" value="P-loop_NTPase"/>
</dbReference>
<dbReference type="InterPro" id="IPR049261">
    <property type="entry name" value="RecA-like_C"/>
</dbReference>
<dbReference type="InterPro" id="IPR049428">
    <property type="entry name" value="RecA-like_N"/>
</dbReference>
<dbReference type="InterPro" id="IPR020588">
    <property type="entry name" value="RecA_ATP-bd"/>
</dbReference>
<dbReference type="InterPro" id="IPR023400">
    <property type="entry name" value="RecA_C_sf"/>
</dbReference>
<dbReference type="InterPro" id="IPR020587">
    <property type="entry name" value="RecA_monomer-monomer_interface"/>
</dbReference>
<dbReference type="NCBIfam" id="TIGR02012">
    <property type="entry name" value="tigrfam_recA"/>
    <property type="match status" value="1"/>
</dbReference>
<dbReference type="PANTHER" id="PTHR45900:SF1">
    <property type="entry name" value="MITOCHONDRIAL DNA REPAIR PROTEIN RECA HOMOLOG-RELATED"/>
    <property type="match status" value="1"/>
</dbReference>
<dbReference type="PANTHER" id="PTHR45900">
    <property type="entry name" value="RECA"/>
    <property type="match status" value="1"/>
</dbReference>
<dbReference type="Pfam" id="PF00154">
    <property type="entry name" value="RecA"/>
    <property type="match status" value="1"/>
</dbReference>
<dbReference type="Pfam" id="PF21096">
    <property type="entry name" value="RecA_C"/>
    <property type="match status" value="1"/>
</dbReference>
<dbReference type="PRINTS" id="PR00142">
    <property type="entry name" value="RECA"/>
</dbReference>
<dbReference type="SMART" id="SM00382">
    <property type="entry name" value="AAA"/>
    <property type="match status" value="1"/>
</dbReference>
<dbReference type="SUPFAM" id="SSF52540">
    <property type="entry name" value="P-loop containing nucleoside triphosphate hydrolases"/>
    <property type="match status" value="1"/>
</dbReference>
<dbReference type="SUPFAM" id="SSF54752">
    <property type="entry name" value="RecA protein, C-terminal domain"/>
    <property type="match status" value="1"/>
</dbReference>
<dbReference type="PROSITE" id="PS50162">
    <property type="entry name" value="RECA_2"/>
    <property type="match status" value="1"/>
</dbReference>
<dbReference type="PROSITE" id="PS50163">
    <property type="entry name" value="RECA_3"/>
    <property type="match status" value="1"/>
</dbReference>
<reference key="1">
    <citation type="journal article" date="2003" name="Proc. Natl. Acad. Sci. U.S.A.">
        <title>Complete genome sequence of the marine planctomycete Pirellula sp. strain 1.</title>
        <authorList>
            <person name="Gloeckner F.O."/>
            <person name="Kube M."/>
            <person name="Bauer M."/>
            <person name="Teeling H."/>
            <person name="Lombardot T."/>
            <person name="Ludwig W."/>
            <person name="Gade D."/>
            <person name="Beck A."/>
            <person name="Borzym K."/>
            <person name="Heitmann K."/>
            <person name="Rabus R."/>
            <person name="Schlesner H."/>
            <person name="Amann R."/>
            <person name="Reinhardt R."/>
        </authorList>
    </citation>
    <scope>NUCLEOTIDE SEQUENCE [LARGE SCALE GENOMIC DNA]</scope>
    <source>
        <strain>DSM 10527 / NCIMB 13988 / SH1</strain>
    </source>
</reference>
<feature type="chain" id="PRO_0000122816" description="Protein RecA">
    <location>
        <begin position="1"/>
        <end position="375"/>
    </location>
</feature>
<feature type="binding site" evidence="1">
    <location>
        <begin position="88"/>
        <end position="95"/>
    </location>
    <ligand>
        <name>ATP</name>
        <dbReference type="ChEBI" id="CHEBI:30616"/>
    </ligand>
</feature>
<evidence type="ECO:0000255" key="1">
    <source>
        <dbReference type="HAMAP-Rule" id="MF_00268"/>
    </source>
</evidence>